<reference key="1">
    <citation type="journal article" date="2005" name="J. Bacteriol.">
        <title>Insights on evolution of virulence and resistance from the complete genome analysis of an early methicillin-resistant Staphylococcus aureus strain and a biofilm-producing methicillin-resistant Staphylococcus epidermidis strain.</title>
        <authorList>
            <person name="Gill S.R."/>
            <person name="Fouts D.E."/>
            <person name="Archer G.L."/>
            <person name="Mongodin E.F."/>
            <person name="DeBoy R.T."/>
            <person name="Ravel J."/>
            <person name="Paulsen I.T."/>
            <person name="Kolonay J.F."/>
            <person name="Brinkac L.M."/>
            <person name="Beanan M.J."/>
            <person name="Dodson R.J."/>
            <person name="Daugherty S.C."/>
            <person name="Madupu R."/>
            <person name="Angiuoli S.V."/>
            <person name="Durkin A.S."/>
            <person name="Haft D.H."/>
            <person name="Vamathevan J.J."/>
            <person name="Khouri H."/>
            <person name="Utterback T.R."/>
            <person name="Lee C."/>
            <person name="Dimitrov G."/>
            <person name="Jiang L."/>
            <person name="Qin H."/>
            <person name="Weidman J."/>
            <person name="Tran K."/>
            <person name="Kang K.H."/>
            <person name="Hance I.R."/>
            <person name="Nelson K.E."/>
            <person name="Fraser C.M."/>
        </authorList>
    </citation>
    <scope>NUCLEOTIDE SEQUENCE [LARGE SCALE GENOMIC DNA]</scope>
    <source>
        <strain>ATCC 35984 / DSM 28319 / BCRC 17069 / CCUG 31568 / BM 3577 / RP62A</strain>
    </source>
</reference>
<comment type="function">
    <text evidence="1">Probably involved in cell-wall metabolism.</text>
</comment>
<comment type="subcellular location">
    <subcellularLocation>
        <location evidence="5">Secreted</location>
    </subcellularLocation>
</comment>
<comment type="similarity">
    <text evidence="5">Belongs to the N-acetylmuramoyl-L-alanine amidase 3 family.</text>
</comment>
<feature type="signal peptide" evidence="2">
    <location>
        <begin position="1"/>
        <end position="40"/>
    </location>
</feature>
<feature type="chain" id="PRO_0000226286" description="Probable cell wall amidase LytH">
    <location>
        <begin position="41"/>
        <end position="291"/>
    </location>
</feature>
<feature type="domain" description="SH3b" evidence="3">
    <location>
        <begin position="41"/>
        <end position="105"/>
    </location>
</feature>
<feature type="domain" description="MurNAc-LAA" evidence="2">
    <location>
        <begin position="122"/>
        <end position="286"/>
    </location>
</feature>
<feature type="region of interest" description="Disordered" evidence="4">
    <location>
        <begin position="123"/>
        <end position="147"/>
    </location>
</feature>
<feature type="compositionally biased region" description="Polar residues" evidence="4">
    <location>
        <begin position="133"/>
        <end position="142"/>
    </location>
</feature>
<organism>
    <name type="scientific">Staphylococcus epidermidis (strain ATCC 35984 / DSM 28319 / BCRC 17069 / CCUG 31568 / BM 3577 / RP62A)</name>
    <dbReference type="NCBI Taxonomy" id="176279"/>
    <lineage>
        <taxon>Bacteria</taxon>
        <taxon>Bacillati</taxon>
        <taxon>Bacillota</taxon>
        <taxon>Bacilli</taxon>
        <taxon>Bacillales</taxon>
        <taxon>Staphylococcaceae</taxon>
        <taxon>Staphylococcus</taxon>
    </lineage>
</organism>
<accession>Q5HNS0</accession>
<evidence type="ECO:0000250" key="1"/>
<evidence type="ECO:0000255" key="2"/>
<evidence type="ECO:0000255" key="3">
    <source>
        <dbReference type="PROSITE-ProRule" id="PRU01117"/>
    </source>
</evidence>
<evidence type="ECO:0000256" key="4">
    <source>
        <dbReference type="SAM" id="MobiDB-lite"/>
    </source>
</evidence>
<evidence type="ECO:0000305" key="5"/>
<proteinExistence type="inferred from homology"/>
<gene>
    <name type="primary">lytH</name>
    <name type="ordered locus">SERP1194</name>
</gene>
<dbReference type="EC" id="3.5.1.-"/>
<dbReference type="EMBL" id="CP000029">
    <property type="protein sequence ID" value="AAW54573.1"/>
    <property type="molecule type" value="Genomic_DNA"/>
</dbReference>
<dbReference type="RefSeq" id="WP_002470411.1">
    <property type="nucleotide sequence ID" value="NC_002976.3"/>
</dbReference>
<dbReference type="SMR" id="Q5HNS0"/>
<dbReference type="STRING" id="176279.SERP1194"/>
<dbReference type="KEGG" id="ser:SERP1194"/>
<dbReference type="eggNOG" id="COG0860">
    <property type="taxonomic scope" value="Bacteria"/>
</dbReference>
<dbReference type="HOGENOM" id="CLU_014322_1_1_9"/>
<dbReference type="Proteomes" id="UP000000531">
    <property type="component" value="Chromosome"/>
</dbReference>
<dbReference type="GO" id="GO:0005576">
    <property type="term" value="C:extracellular region"/>
    <property type="evidence" value="ECO:0007669"/>
    <property type="project" value="UniProtKB-SubCell"/>
</dbReference>
<dbReference type="GO" id="GO:0030288">
    <property type="term" value="C:outer membrane-bounded periplasmic space"/>
    <property type="evidence" value="ECO:0007669"/>
    <property type="project" value="TreeGrafter"/>
</dbReference>
<dbReference type="GO" id="GO:0008745">
    <property type="term" value="F:N-acetylmuramoyl-L-alanine amidase activity"/>
    <property type="evidence" value="ECO:0007669"/>
    <property type="project" value="InterPro"/>
</dbReference>
<dbReference type="GO" id="GO:0071555">
    <property type="term" value="P:cell wall organization"/>
    <property type="evidence" value="ECO:0007669"/>
    <property type="project" value="UniProtKB-KW"/>
</dbReference>
<dbReference type="GO" id="GO:0009253">
    <property type="term" value="P:peptidoglycan catabolic process"/>
    <property type="evidence" value="ECO:0007669"/>
    <property type="project" value="InterPro"/>
</dbReference>
<dbReference type="CDD" id="cd02696">
    <property type="entry name" value="MurNAc-LAA"/>
    <property type="match status" value="1"/>
</dbReference>
<dbReference type="Gene3D" id="2.30.30.40">
    <property type="entry name" value="SH3 Domains"/>
    <property type="match status" value="1"/>
</dbReference>
<dbReference type="Gene3D" id="3.40.630.40">
    <property type="entry name" value="Zn-dependent exopeptidases"/>
    <property type="match status" value="1"/>
</dbReference>
<dbReference type="InterPro" id="IPR017273">
    <property type="entry name" value="LytH"/>
</dbReference>
<dbReference type="InterPro" id="IPR002508">
    <property type="entry name" value="MurNAc-LAA_cat"/>
</dbReference>
<dbReference type="InterPro" id="IPR050695">
    <property type="entry name" value="N-acetylmuramoyl_amidase_3"/>
</dbReference>
<dbReference type="InterPro" id="IPR003646">
    <property type="entry name" value="SH3-like_bac-type"/>
</dbReference>
<dbReference type="PANTHER" id="PTHR30404:SF7">
    <property type="entry name" value="CELL WALL AMIDASE LYTH-RELATED"/>
    <property type="match status" value="1"/>
</dbReference>
<dbReference type="PANTHER" id="PTHR30404">
    <property type="entry name" value="N-ACETYLMURAMOYL-L-ALANINE AMIDASE"/>
    <property type="match status" value="1"/>
</dbReference>
<dbReference type="Pfam" id="PF01520">
    <property type="entry name" value="Amidase_3"/>
    <property type="match status" value="1"/>
</dbReference>
<dbReference type="Pfam" id="PF08239">
    <property type="entry name" value="SH3_3"/>
    <property type="match status" value="1"/>
</dbReference>
<dbReference type="PIRSF" id="PIRSF037730">
    <property type="entry name" value="CWA_LytH_prd"/>
    <property type="match status" value="1"/>
</dbReference>
<dbReference type="SMART" id="SM00646">
    <property type="entry name" value="Ami_3"/>
    <property type="match status" value="1"/>
</dbReference>
<dbReference type="SMART" id="SM00287">
    <property type="entry name" value="SH3b"/>
    <property type="match status" value="1"/>
</dbReference>
<dbReference type="SUPFAM" id="SSF53187">
    <property type="entry name" value="Zn-dependent exopeptidases"/>
    <property type="match status" value="1"/>
</dbReference>
<dbReference type="PROSITE" id="PS51781">
    <property type="entry name" value="SH3B"/>
    <property type="match status" value="1"/>
</dbReference>
<name>LYTH_STAEQ</name>
<keyword id="KW-0961">Cell wall biogenesis/degradation</keyword>
<keyword id="KW-0378">Hydrolase</keyword>
<keyword id="KW-1185">Reference proteome</keyword>
<keyword id="KW-0964">Secreted</keyword>
<keyword id="KW-0732">Signal</keyword>
<sequence>MKKIDSWLTKHGLKNRLTLVVIVIFIIFLILLFMFVNLSDEDTGQITITENAELRTGPNAAYPVIYKIEKGESFKKIDRKGKWIEVQNHAGTEKGWVAGWHTNLNIPADQSLSSNPLKGKTIVLDPGHGGSDQGASSSTPSKSLEKNYTLKTAKELKKLLNKEGAHVKMTRSNDKYVSLDDRNIKGDAFISIHNDALDSSNANGVTVYWFKDKQETLAQTLNSAIQKKALLTNRGSRQQNYQVLRQTDIPAVLLELGYISNPTDESMINDQLHRQVVEQAIVDGLKQYFSS</sequence>
<protein>
    <recommendedName>
        <fullName>Probable cell wall amidase LytH</fullName>
        <ecNumber>3.5.1.-</ecNumber>
    </recommendedName>
</protein>